<feature type="chain" id="PRO_1000055604" description="Large ribosomal subunit protein uL14">
    <location>
        <begin position="1"/>
        <end position="122"/>
    </location>
</feature>
<protein>
    <recommendedName>
        <fullName evidence="1">Large ribosomal subunit protein uL14</fullName>
    </recommendedName>
    <alternativeName>
        <fullName evidence="2">50S ribosomal protein L14</fullName>
    </alternativeName>
</protein>
<name>RL14_LACDA</name>
<comment type="function">
    <text evidence="1">Binds to 23S rRNA. Forms part of two intersubunit bridges in the 70S ribosome.</text>
</comment>
<comment type="subunit">
    <text evidence="1">Part of the 50S ribosomal subunit. Forms a cluster with proteins L3 and L19. In the 70S ribosome, L14 and L19 interact and together make contacts with the 16S rRNA in bridges B5 and B8.</text>
</comment>
<comment type="similarity">
    <text evidence="1">Belongs to the universal ribosomal protein uL14 family.</text>
</comment>
<organism>
    <name type="scientific">Lactobacillus delbrueckii subsp. bulgaricus (strain ATCC 11842 / DSM 20081 / BCRC 10696 / JCM 1002 / NBRC 13953 / NCIMB 11778 / NCTC 12712 / WDCM 00102 / Lb 14)</name>
    <dbReference type="NCBI Taxonomy" id="390333"/>
    <lineage>
        <taxon>Bacteria</taxon>
        <taxon>Bacillati</taxon>
        <taxon>Bacillota</taxon>
        <taxon>Bacilli</taxon>
        <taxon>Lactobacillales</taxon>
        <taxon>Lactobacillaceae</taxon>
        <taxon>Lactobacillus</taxon>
    </lineage>
</organism>
<dbReference type="EMBL" id="CR954253">
    <property type="protein sequence ID" value="CAI97241.1"/>
    <property type="molecule type" value="Genomic_DNA"/>
</dbReference>
<dbReference type="RefSeq" id="WP_011543642.1">
    <property type="nucleotide sequence ID" value="NC_008054.1"/>
</dbReference>
<dbReference type="SMR" id="Q1GBK8"/>
<dbReference type="STRING" id="390333.Ldb0406"/>
<dbReference type="KEGG" id="ldb:Ldb0406"/>
<dbReference type="PATRIC" id="fig|390333.13.peg.384"/>
<dbReference type="eggNOG" id="COG0093">
    <property type="taxonomic scope" value="Bacteria"/>
</dbReference>
<dbReference type="HOGENOM" id="CLU_095071_2_1_9"/>
<dbReference type="BioCyc" id="LDEL390333:LDB_RS01725-MONOMER"/>
<dbReference type="Proteomes" id="UP000001259">
    <property type="component" value="Chromosome"/>
</dbReference>
<dbReference type="GO" id="GO:0022625">
    <property type="term" value="C:cytosolic large ribosomal subunit"/>
    <property type="evidence" value="ECO:0007669"/>
    <property type="project" value="TreeGrafter"/>
</dbReference>
<dbReference type="GO" id="GO:0070180">
    <property type="term" value="F:large ribosomal subunit rRNA binding"/>
    <property type="evidence" value="ECO:0007669"/>
    <property type="project" value="TreeGrafter"/>
</dbReference>
<dbReference type="GO" id="GO:0003735">
    <property type="term" value="F:structural constituent of ribosome"/>
    <property type="evidence" value="ECO:0007669"/>
    <property type="project" value="InterPro"/>
</dbReference>
<dbReference type="GO" id="GO:0006412">
    <property type="term" value="P:translation"/>
    <property type="evidence" value="ECO:0007669"/>
    <property type="project" value="UniProtKB-UniRule"/>
</dbReference>
<dbReference type="CDD" id="cd00337">
    <property type="entry name" value="Ribosomal_uL14"/>
    <property type="match status" value="1"/>
</dbReference>
<dbReference type="FunFam" id="2.40.150.20:FF:000001">
    <property type="entry name" value="50S ribosomal protein L14"/>
    <property type="match status" value="1"/>
</dbReference>
<dbReference type="Gene3D" id="2.40.150.20">
    <property type="entry name" value="Ribosomal protein L14"/>
    <property type="match status" value="1"/>
</dbReference>
<dbReference type="HAMAP" id="MF_01367">
    <property type="entry name" value="Ribosomal_uL14"/>
    <property type="match status" value="1"/>
</dbReference>
<dbReference type="InterPro" id="IPR000218">
    <property type="entry name" value="Ribosomal_uL14"/>
</dbReference>
<dbReference type="InterPro" id="IPR005745">
    <property type="entry name" value="Ribosomal_uL14_bac-type"/>
</dbReference>
<dbReference type="InterPro" id="IPR019972">
    <property type="entry name" value="Ribosomal_uL14_CS"/>
</dbReference>
<dbReference type="InterPro" id="IPR036853">
    <property type="entry name" value="Ribosomal_uL14_sf"/>
</dbReference>
<dbReference type="NCBIfam" id="TIGR01067">
    <property type="entry name" value="rplN_bact"/>
    <property type="match status" value="1"/>
</dbReference>
<dbReference type="PANTHER" id="PTHR11761">
    <property type="entry name" value="50S/60S RIBOSOMAL PROTEIN L14/L23"/>
    <property type="match status" value="1"/>
</dbReference>
<dbReference type="PANTHER" id="PTHR11761:SF3">
    <property type="entry name" value="LARGE RIBOSOMAL SUBUNIT PROTEIN UL14M"/>
    <property type="match status" value="1"/>
</dbReference>
<dbReference type="Pfam" id="PF00238">
    <property type="entry name" value="Ribosomal_L14"/>
    <property type="match status" value="1"/>
</dbReference>
<dbReference type="SMART" id="SM01374">
    <property type="entry name" value="Ribosomal_L14"/>
    <property type="match status" value="1"/>
</dbReference>
<dbReference type="SUPFAM" id="SSF50193">
    <property type="entry name" value="Ribosomal protein L14"/>
    <property type="match status" value="1"/>
</dbReference>
<dbReference type="PROSITE" id="PS00049">
    <property type="entry name" value="RIBOSOMAL_L14"/>
    <property type="match status" value="1"/>
</dbReference>
<evidence type="ECO:0000255" key="1">
    <source>
        <dbReference type="HAMAP-Rule" id="MF_01367"/>
    </source>
</evidence>
<evidence type="ECO:0000305" key="2"/>
<keyword id="KW-1185">Reference proteome</keyword>
<keyword id="KW-0687">Ribonucleoprotein</keyword>
<keyword id="KW-0689">Ribosomal protein</keyword>
<keyword id="KW-0694">RNA-binding</keyword>
<keyword id="KW-0699">rRNA-binding</keyword>
<gene>
    <name evidence="1" type="primary">rplN</name>
    <name type="ordered locus">Ldb0406</name>
</gene>
<reference key="1">
    <citation type="journal article" date="2006" name="Proc. Natl. Acad. Sci. U.S.A.">
        <title>The complete genome sequence of Lactobacillus bulgaricus reveals extensive and ongoing reductive evolution.</title>
        <authorList>
            <person name="van de Guchte M."/>
            <person name="Penaud S."/>
            <person name="Grimaldi C."/>
            <person name="Barbe V."/>
            <person name="Bryson K."/>
            <person name="Nicolas P."/>
            <person name="Robert C."/>
            <person name="Oztas S."/>
            <person name="Mangenot S."/>
            <person name="Couloux A."/>
            <person name="Loux V."/>
            <person name="Dervyn R."/>
            <person name="Bossy R."/>
            <person name="Bolotin A."/>
            <person name="Batto J.-M."/>
            <person name="Walunas T."/>
            <person name="Gibrat J.-F."/>
            <person name="Bessieres P."/>
            <person name="Weissenbach J."/>
            <person name="Ehrlich S.D."/>
            <person name="Maguin E."/>
        </authorList>
    </citation>
    <scope>NUCLEOTIDE SEQUENCE [LARGE SCALE GENOMIC DNA]</scope>
    <source>
        <strain>ATCC 11842 / DSM 20081 / BCRC 10696 / JCM 1002 / NBRC 13953 / NCIMB 11778 / NCTC 12712 / WDCM 00102 / Lb 14</strain>
    </source>
</reference>
<accession>Q1GBK8</accession>
<proteinExistence type="inferred from homology"/>
<sequence length="122" mass="13115">MIQTETRLKVADNSGARELLVIRVMGGSKRKTGNIGDIVVAAVKQATPGGVVKKGDVVKAVIVRTKSGARREDGSYIKFDENAAVIINADKSPRGTRIFGPVARELREGDFMKIVSLAHEVL</sequence>